<name>RS13_EHRRW</name>
<reference key="1">
    <citation type="journal article" date="2005" name="Proc. Natl. Acad. Sci. U.S.A.">
        <title>The genome of the heartwater agent Ehrlichia ruminantium contains multiple tandem repeats of actively variable copy number.</title>
        <authorList>
            <person name="Collins N.E."/>
            <person name="Liebenberg J."/>
            <person name="de Villiers E.P."/>
            <person name="Brayton K.A."/>
            <person name="Louw E."/>
            <person name="Pretorius A."/>
            <person name="Faber F.E."/>
            <person name="van Heerden H."/>
            <person name="Josemans A."/>
            <person name="van Kleef M."/>
            <person name="Steyn H.C."/>
            <person name="van Strijp M.F."/>
            <person name="Zweygarth E."/>
            <person name="Jongejan F."/>
            <person name="Maillard J.C."/>
            <person name="Berthier D."/>
            <person name="Botha M."/>
            <person name="Joubert F."/>
            <person name="Corton C.H."/>
            <person name="Thomson N.R."/>
            <person name="Allsopp M.T."/>
            <person name="Allsopp B.A."/>
        </authorList>
    </citation>
    <scope>NUCLEOTIDE SEQUENCE [LARGE SCALE GENOMIC DNA]</scope>
    <source>
        <strain>Welgevonden</strain>
    </source>
</reference>
<reference key="2">
    <citation type="journal article" date="2006" name="J. Bacteriol.">
        <title>Comparative genomic analysis of three strains of Ehrlichia ruminantium reveals an active process of genome size plasticity.</title>
        <authorList>
            <person name="Frutos R."/>
            <person name="Viari A."/>
            <person name="Ferraz C."/>
            <person name="Morgat A."/>
            <person name="Eychenie S."/>
            <person name="Kandassamy Y."/>
            <person name="Chantal I."/>
            <person name="Bensaid A."/>
            <person name="Coissac E."/>
            <person name="Vachiery N."/>
            <person name="Demaille J."/>
            <person name="Martinez D."/>
        </authorList>
    </citation>
    <scope>NUCLEOTIDE SEQUENCE [LARGE SCALE GENOMIC DNA]</scope>
    <source>
        <strain>Welgevonden</strain>
    </source>
</reference>
<feature type="chain" id="PRO_0000230505" description="Small ribosomal subunit protein uS13">
    <location>
        <begin position="1"/>
        <end position="123"/>
    </location>
</feature>
<feature type="region of interest" description="Disordered" evidence="2">
    <location>
        <begin position="97"/>
        <end position="123"/>
    </location>
</feature>
<accession>Q5HAU3</accession>
<accession>Q5FD36</accession>
<keyword id="KW-0687">Ribonucleoprotein</keyword>
<keyword id="KW-0689">Ribosomal protein</keyword>
<keyword id="KW-0694">RNA-binding</keyword>
<keyword id="KW-0699">rRNA-binding</keyword>
<keyword id="KW-0820">tRNA-binding</keyword>
<protein>
    <recommendedName>
        <fullName evidence="1">Small ribosomal subunit protein uS13</fullName>
    </recommendedName>
    <alternativeName>
        <fullName evidence="3">30S ribosomal protein S13</fullName>
    </alternativeName>
</protein>
<gene>
    <name evidence="1" type="primary">rpsM</name>
    <name type="ordered locus">Erum5870</name>
    <name type="ordered locus">ERWE_CDS_06170</name>
</gene>
<dbReference type="EMBL" id="CR767821">
    <property type="protein sequence ID" value="CAH58318.1"/>
    <property type="molecule type" value="Genomic_DNA"/>
</dbReference>
<dbReference type="EMBL" id="CR925678">
    <property type="protein sequence ID" value="CAI27111.1"/>
    <property type="molecule type" value="Genomic_DNA"/>
</dbReference>
<dbReference type="RefSeq" id="WP_011155268.1">
    <property type="nucleotide sequence ID" value="NC_005295.2"/>
</dbReference>
<dbReference type="SMR" id="Q5HAU3"/>
<dbReference type="GeneID" id="33057529"/>
<dbReference type="KEGG" id="eru:Erum5870"/>
<dbReference type="KEGG" id="erw:ERWE_CDS_06170"/>
<dbReference type="eggNOG" id="COG0099">
    <property type="taxonomic scope" value="Bacteria"/>
</dbReference>
<dbReference type="HOGENOM" id="CLU_103849_1_2_5"/>
<dbReference type="Proteomes" id="UP000001021">
    <property type="component" value="Chromosome"/>
</dbReference>
<dbReference type="GO" id="GO:0005829">
    <property type="term" value="C:cytosol"/>
    <property type="evidence" value="ECO:0007669"/>
    <property type="project" value="TreeGrafter"/>
</dbReference>
<dbReference type="GO" id="GO:0015935">
    <property type="term" value="C:small ribosomal subunit"/>
    <property type="evidence" value="ECO:0007669"/>
    <property type="project" value="TreeGrafter"/>
</dbReference>
<dbReference type="GO" id="GO:0019843">
    <property type="term" value="F:rRNA binding"/>
    <property type="evidence" value="ECO:0007669"/>
    <property type="project" value="UniProtKB-UniRule"/>
</dbReference>
<dbReference type="GO" id="GO:0003735">
    <property type="term" value="F:structural constituent of ribosome"/>
    <property type="evidence" value="ECO:0007669"/>
    <property type="project" value="InterPro"/>
</dbReference>
<dbReference type="GO" id="GO:0000049">
    <property type="term" value="F:tRNA binding"/>
    <property type="evidence" value="ECO:0007669"/>
    <property type="project" value="UniProtKB-UniRule"/>
</dbReference>
<dbReference type="GO" id="GO:0006412">
    <property type="term" value="P:translation"/>
    <property type="evidence" value="ECO:0007669"/>
    <property type="project" value="UniProtKB-UniRule"/>
</dbReference>
<dbReference type="FunFam" id="1.10.8.50:FF:000001">
    <property type="entry name" value="30S ribosomal protein S13"/>
    <property type="match status" value="1"/>
</dbReference>
<dbReference type="FunFam" id="4.10.910.10:FF:000001">
    <property type="entry name" value="30S ribosomal protein S13"/>
    <property type="match status" value="1"/>
</dbReference>
<dbReference type="Gene3D" id="1.10.8.50">
    <property type="match status" value="1"/>
</dbReference>
<dbReference type="Gene3D" id="4.10.910.10">
    <property type="entry name" value="30s ribosomal protein s13, domain 2"/>
    <property type="match status" value="1"/>
</dbReference>
<dbReference type="HAMAP" id="MF_01315">
    <property type="entry name" value="Ribosomal_uS13"/>
    <property type="match status" value="1"/>
</dbReference>
<dbReference type="InterPro" id="IPR027437">
    <property type="entry name" value="Rbsml_uS13_C"/>
</dbReference>
<dbReference type="InterPro" id="IPR001892">
    <property type="entry name" value="Ribosomal_uS13"/>
</dbReference>
<dbReference type="InterPro" id="IPR010979">
    <property type="entry name" value="Ribosomal_uS13-like_H2TH"/>
</dbReference>
<dbReference type="InterPro" id="IPR019980">
    <property type="entry name" value="Ribosomal_uS13_bac-type"/>
</dbReference>
<dbReference type="InterPro" id="IPR018269">
    <property type="entry name" value="Ribosomal_uS13_CS"/>
</dbReference>
<dbReference type="NCBIfam" id="TIGR03631">
    <property type="entry name" value="uS13_bact"/>
    <property type="match status" value="1"/>
</dbReference>
<dbReference type="PANTHER" id="PTHR10871">
    <property type="entry name" value="30S RIBOSOMAL PROTEIN S13/40S RIBOSOMAL PROTEIN S18"/>
    <property type="match status" value="1"/>
</dbReference>
<dbReference type="PANTHER" id="PTHR10871:SF1">
    <property type="entry name" value="SMALL RIBOSOMAL SUBUNIT PROTEIN US13M"/>
    <property type="match status" value="1"/>
</dbReference>
<dbReference type="Pfam" id="PF00416">
    <property type="entry name" value="Ribosomal_S13"/>
    <property type="match status" value="1"/>
</dbReference>
<dbReference type="PIRSF" id="PIRSF002134">
    <property type="entry name" value="Ribosomal_S13"/>
    <property type="match status" value="1"/>
</dbReference>
<dbReference type="SUPFAM" id="SSF46946">
    <property type="entry name" value="S13-like H2TH domain"/>
    <property type="match status" value="1"/>
</dbReference>
<dbReference type="PROSITE" id="PS00646">
    <property type="entry name" value="RIBOSOMAL_S13_1"/>
    <property type="match status" value="1"/>
</dbReference>
<dbReference type="PROSITE" id="PS50159">
    <property type="entry name" value="RIBOSOMAL_S13_2"/>
    <property type="match status" value="1"/>
</dbReference>
<organism>
    <name type="scientific">Ehrlichia ruminantium (strain Welgevonden)</name>
    <dbReference type="NCBI Taxonomy" id="254945"/>
    <lineage>
        <taxon>Bacteria</taxon>
        <taxon>Pseudomonadati</taxon>
        <taxon>Pseudomonadota</taxon>
        <taxon>Alphaproteobacteria</taxon>
        <taxon>Rickettsiales</taxon>
        <taxon>Anaplasmataceae</taxon>
        <taxon>Ehrlichia</taxon>
    </lineage>
</organism>
<evidence type="ECO:0000255" key="1">
    <source>
        <dbReference type="HAMAP-Rule" id="MF_01315"/>
    </source>
</evidence>
<evidence type="ECO:0000256" key="2">
    <source>
        <dbReference type="SAM" id="MobiDB-lite"/>
    </source>
</evidence>
<evidence type="ECO:0000305" key="3"/>
<comment type="function">
    <text evidence="1">Located at the top of the head of the 30S subunit, it contacts several helices of the 16S rRNA. In the 70S ribosome it contacts the 23S rRNA (bridge B1a) and protein L5 of the 50S subunit (bridge B1b), connecting the 2 subunits; these bridges are implicated in subunit movement. Contacts the tRNAs in the A and P-sites.</text>
</comment>
<comment type="subunit">
    <text evidence="1">Part of the 30S ribosomal subunit. Forms a loose heterodimer with protein S19. Forms two bridges to the 50S subunit in the 70S ribosome.</text>
</comment>
<comment type="similarity">
    <text evidence="1">Belongs to the universal ribosomal protein uS13 family.</text>
</comment>
<sequence>MARIAGVNIPTNKRVVIALTYIYGIGISLANKICESCNIDHNIRVVNLSDDEIIRIRNFIRENYVVEGDLRKEVSMNIKFLTDIGCYRGLRHRRGLPVRGQRTHTNAKTRKGRSRLPVAAKKK</sequence>
<proteinExistence type="inferred from homology"/>